<name>GLGA_STRMU</name>
<feature type="chain" id="PRO_0000188648" description="Glycogen synthase">
    <location>
        <begin position="1"/>
        <end position="476"/>
    </location>
</feature>
<feature type="binding site" evidence="1">
    <location>
        <position position="15"/>
    </location>
    <ligand>
        <name>ADP-alpha-D-glucose</name>
        <dbReference type="ChEBI" id="CHEBI:57498"/>
    </ligand>
</feature>
<accession>Q8CWX0</accession>
<organism>
    <name type="scientific">Streptococcus mutans serotype c (strain ATCC 700610 / UA159)</name>
    <dbReference type="NCBI Taxonomy" id="210007"/>
    <lineage>
        <taxon>Bacteria</taxon>
        <taxon>Bacillati</taxon>
        <taxon>Bacillota</taxon>
        <taxon>Bacilli</taxon>
        <taxon>Lactobacillales</taxon>
        <taxon>Streptococcaceae</taxon>
        <taxon>Streptococcus</taxon>
    </lineage>
</organism>
<evidence type="ECO:0000255" key="1">
    <source>
        <dbReference type="HAMAP-Rule" id="MF_00484"/>
    </source>
</evidence>
<comment type="function">
    <text evidence="1">Synthesizes alpha-1,4-glucan chains using ADP-glucose.</text>
</comment>
<comment type="catalytic activity">
    <reaction evidence="1">
        <text>[(1-&gt;4)-alpha-D-glucosyl](n) + ADP-alpha-D-glucose = [(1-&gt;4)-alpha-D-glucosyl](n+1) + ADP + H(+)</text>
        <dbReference type="Rhea" id="RHEA:18189"/>
        <dbReference type="Rhea" id="RHEA-COMP:9584"/>
        <dbReference type="Rhea" id="RHEA-COMP:9587"/>
        <dbReference type="ChEBI" id="CHEBI:15378"/>
        <dbReference type="ChEBI" id="CHEBI:15444"/>
        <dbReference type="ChEBI" id="CHEBI:57498"/>
        <dbReference type="ChEBI" id="CHEBI:456216"/>
        <dbReference type="EC" id="2.4.1.21"/>
    </reaction>
</comment>
<comment type="pathway">
    <text evidence="1">Glycan biosynthesis; glycogen biosynthesis.</text>
</comment>
<comment type="similarity">
    <text evidence="1">Belongs to the glycosyltransferase 1 family. Bacterial/plant glycogen synthase subfamily.</text>
</comment>
<reference key="1">
    <citation type="journal article" date="2002" name="Proc. Natl. Acad. Sci. U.S.A.">
        <title>Genome sequence of Streptococcus mutans UA159, a cariogenic dental pathogen.</title>
        <authorList>
            <person name="Ajdic D.J."/>
            <person name="McShan W.M."/>
            <person name="McLaughlin R.E."/>
            <person name="Savic G."/>
            <person name="Chang J."/>
            <person name="Carson M.B."/>
            <person name="Primeaux C."/>
            <person name="Tian R."/>
            <person name="Kenton S."/>
            <person name="Jia H.G."/>
            <person name="Lin S.P."/>
            <person name="Qian Y."/>
            <person name="Li S."/>
            <person name="Zhu H."/>
            <person name="Najar F.Z."/>
            <person name="Lai H."/>
            <person name="White J."/>
            <person name="Roe B.A."/>
            <person name="Ferretti J.J."/>
        </authorList>
    </citation>
    <scope>NUCLEOTIDE SEQUENCE [LARGE SCALE GENOMIC DNA]</scope>
    <source>
        <strain>ATCC 700610 / UA159</strain>
    </source>
</reference>
<gene>
    <name evidence="1" type="primary">glgA</name>
    <name type="ordered locus">SMU_1536</name>
</gene>
<sequence length="476" mass="54312">MKILFVAAEGAPFAKTGGLGDVIGALPKSLVKNNNEVSVILPYYDVVDAKFGDQIEDLFYFFTNVGWRREYVGIKHIFRDGVDFYFIDNKHYFYRGQIYGEFDDGERFAYFQLAALEAMEKIQFIPDILHVHDYHTAMIPYLLKEKYHWINAYHGIKTVFTIHNIEFQGQFNPSMLGELFGVGDERYRDGTLRWNDCLNWMKAAVLYADRVTTVSPSYAKEIMTPEFGKGLDQIMRMESGKLSGVVNGIDTDLFDPETDPHLAVHFSKDDLSGKAKNKAALQERVGLPVREDVPLVGIVSRLTDQKGFQLVVDQLNTMMQLDLQIVLLGTGYADFENAFAWFGHAYPDKMSANITFDLELAQQIYAASDIFLMPSAFEPCGLSQMMAMRYGTLPLVHEVGGLRDTVIPYNEFEKTGTGFGFQDFSGYWLTKTLEAALDVYYNRKEDWKILQKNAMTTDFSWDTASQSYEHLYKELA</sequence>
<keyword id="KW-0320">Glycogen biosynthesis</keyword>
<keyword id="KW-0328">Glycosyltransferase</keyword>
<keyword id="KW-1185">Reference proteome</keyword>
<keyword id="KW-0808">Transferase</keyword>
<protein>
    <recommendedName>
        <fullName evidence="1">Glycogen synthase</fullName>
        <ecNumber evidence="1">2.4.1.21</ecNumber>
    </recommendedName>
    <alternativeName>
        <fullName evidence="1">Starch [bacterial glycogen] synthase</fullName>
    </alternativeName>
</protein>
<proteinExistence type="inferred from homology"/>
<dbReference type="EC" id="2.4.1.21" evidence="1"/>
<dbReference type="EMBL" id="AE014133">
    <property type="protein sequence ID" value="AAN59186.1"/>
    <property type="molecule type" value="Genomic_DNA"/>
</dbReference>
<dbReference type="RefSeq" id="NP_721880.1">
    <property type="nucleotide sequence ID" value="NC_004350.2"/>
</dbReference>
<dbReference type="RefSeq" id="WP_002262948.1">
    <property type="nucleotide sequence ID" value="NC_004350.2"/>
</dbReference>
<dbReference type="SMR" id="Q8CWX0"/>
<dbReference type="STRING" id="210007.SMU_1536"/>
<dbReference type="CAZy" id="GT5">
    <property type="family name" value="Glycosyltransferase Family 5"/>
</dbReference>
<dbReference type="GeneID" id="93859031"/>
<dbReference type="KEGG" id="smu:SMU_1536"/>
<dbReference type="PATRIC" id="fig|210007.7.peg.1368"/>
<dbReference type="eggNOG" id="COG0297">
    <property type="taxonomic scope" value="Bacteria"/>
</dbReference>
<dbReference type="HOGENOM" id="CLU_009583_18_2_9"/>
<dbReference type="OrthoDB" id="9808590at2"/>
<dbReference type="PhylomeDB" id="Q8CWX0"/>
<dbReference type="UniPathway" id="UPA00164"/>
<dbReference type="Proteomes" id="UP000002512">
    <property type="component" value="Chromosome"/>
</dbReference>
<dbReference type="GO" id="GO:0009011">
    <property type="term" value="F:alpha-1,4-glucan glucosyltransferase (ADP-glucose donor) activity"/>
    <property type="evidence" value="ECO:0007669"/>
    <property type="project" value="UniProtKB-UniRule"/>
</dbReference>
<dbReference type="GO" id="GO:0004373">
    <property type="term" value="F:alpha-1,4-glucan glucosyltransferase (UDP-glucose donor) activity"/>
    <property type="evidence" value="ECO:0007669"/>
    <property type="project" value="InterPro"/>
</dbReference>
<dbReference type="GO" id="GO:0005978">
    <property type="term" value="P:glycogen biosynthetic process"/>
    <property type="evidence" value="ECO:0007669"/>
    <property type="project" value="UniProtKB-UniRule"/>
</dbReference>
<dbReference type="CDD" id="cd03791">
    <property type="entry name" value="GT5_Glycogen_synthase_DULL1-like"/>
    <property type="match status" value="1"/>
</dbReference>
<dbReference type="Gene3D" id="3.40.50.2000">
    <property type="entry name" value="Glycogen Phosphorylase B"/>
    <property type="match status" value="2"/>
</dbReference>
<dbReference type="HAMAP" id="MF_00484">
    <property type="entry name" value="Glycogen_synth"/>
    <property type="match status" value="1"/>
</dbReference>
<dbReference type="InterPro" id="IPR001296">
    <property type="entry name" value="Glyco_trans_1"/>
</dbReference>
<dbReference type="InterPro" id="IPR011835">
    <property type="entry name" value="GS/SS"/>
</dbReference>
<dbReference type="InterPro" id="IPR013534">
    <property type="entry name" value="Starch_synth_cat_dom"/>
</dbReference>
<dbReference type="NCBIfam" id="TIGR02095">
    <property type="entry name" value="glgA"/>
    <property type="match status" value="1"/>
</dbReference>
<dbReference type="NCBIfam" id="NF001898">
    <property type="entry name" value="PRK00654.1-1"/>
    <property type="match status" value="1"/>
</dbReference>
<dbReference type="PANTHER" id="PTHR45825:SF11">
    <property type="entry name" value="ALPHA AMYLASE DOMAIN-CONTAINING PROTEIN"/>
    <property type="match status" value="1"/>
</dbReference>
<dbReference type="PANTHER" id="PTHR45825">
    <property type="entry name" value="GRANULE-BOUND STARCH SYNTHASE 1, CHLOROPLASTIC/AMYLOPLASTIC"/>
    <property type="match status" value="1"/>
</dbReference>
<dbReference type="Pfam" id="PF08323">
    <property type="entry name" value="Glyco_transf_5"/>
    <property type="match status" value="1"/>
</dbReference>
<dbReference type="Pfam" id="PF00534">
    <property type="entry name" value="Glycos_transf_1"/>
    <property type="match status" value="1"/>
</dbReference>
<dbReference type="SUPFAM" id="SSF53756">
    <property type="entry name" value="UDP-Glycosyltransferase/glycogen phosphorylase"/>
    <property type="match status" value="1"/>
</dbReference>